<gene>
    <name evidence="6" type="primary">CAR6</name>
    <name evidence="5" type="synonym">EHB1</name>
    <name evidence="8" type="ordered locus">At1g70800</name>
    <name evidence="9" type="ORF">F15H11.5</name>
    <name evidence="10" type="ORF">F5A18.2</name>
</gene>
<name>CAR6_ARATH</name>
<protein>
    <recommendedName>
        <fullName evidence="6">Protein C2-DOMAIN ABA-RELATED 6</fullName>
    </recommendedName>
    <alternativeName>
        <fullName evidence="5">Protein ENHANCED BENDING 1</fullName>
    </alternativeName>
</protein>
<evidence type="ECO:0000250" key="1">
    <source>
        <dbReference type="UniProtKB" id="Q9FHP6"/>
    </source>
</evidence>
<evidence type="ECO:0000250" key="2">
    <source>
        <dbReference type="UniProtKB" id="Q9LVH4"/>
    </source>
</evidence>
<evidence type="ECO:0000255" key="3">
    <source>
        <dbReference type="PROSITE-ProRule" id="PRU00041"/>
    </source>
</evidence>
<evidence type="ECO:0000269" key="4">
    <source>
    </source>
</evidence>
<evidence type="ECO:0000303" key="5">
    <source>
    </source>
</evidence>
<evidence type="ECO:0000303" key="6">
    <source>
    </source>
</evidence>
<evidence type="ECO:0000305" key="7">
    <source>
    </source>
</evidence>
<evidence type="ECO:0000312" key="8">
    <source>
        <dbReference type="Araport" id="AT1G70800"/>
    </source>
</evidence>
<evidence type="ECO:0000312" key="9">
    <source>
        <dbReference type="EMBL" id="AAD55495.1"/>
    </source>
</evidence>
<evidence type="ECO:0000312" key="10">
    <source>
        <dbReference type="EMBL" id="AAG52328.1"/>
    </source>
</evidence>
<evidence type="ECO:0000312" key="11">
    <source>
        <dbReference type="Proteomes" id="UP000006548"/>
    </source>
</evidence>
<accession>Q9S764</accession>
<keyword id="KW-0938">Abscisic acid signaling pathway</keyword>
<keyword id="KW-0106">Calcium</keyword>
<keyword id="KW-1003">Cell membrane</keyword>
<keyword id="KW-0217">Developmental protein</keyword>
<keyword id="KW-0343">GTPase activation</keyword>
<keyword id="KW-0446">Lipid-binding</keyword>
<keyword id="KW-0472">Membrane</keyword>
<keyword id="KW-0479">Metal-binding</keyword>
<keyword id="KW-0539">Nucleus</keyword>
<keyword id="KW-1185">Reference proteome</keyword>
<dbReference type="EMBL" id="AC008148">
    <property type="protein sequence ID" value="AAD55495.1"/>
    <property type="molecule type" value="Genomic_DNA"/>
</dbReference>
<dbReference type="EMBL" id="AC011663">
    <property type="protein sequence ID" value="AAG52328.1"/>
    <property type="molecule type" value="Genomic_DNA"/>
</dbReference>
<dbReference type="EMBL" id="CP002684">
    <property type="protein sequence ID" value="AEE35118.1"/>
    <property type="molecule type" value="Genomic_DNA"/>
</dbReference>
<dbReference type="EMBL" id="BT010681">
    <property type="protein sequence ID" value="AAR20738.1"/>
    <property type="molecule type" value="mRNA"/>
</dbReference>
<dbReference type="EMBL" id="BT010960">
    <property type="protein sequence ID" value="AAR24738.1"/>
    <property type="molecule type" value="mRNA"/>
</dbReference>
<dbReference type="PIR" id="F96732">
    <property type="entry name" value="F96732"/>
</dbReference>
<dbReference type="RefSeq" id="NP_177237.1">
    <property type="nucleotide sequence ID" value="NM_105748.3"/>
</dbReference>
<dbReference type="SMR" id="Q9S764"/>
<dbReference type="FunCoup" id="Q9S764">
    <property type="interactions" value="16"/>
</dbReference>
<dbReference type="STRING" id="3702.Q9S764"/>
<dbReference type="PaxDb" id="3702-AT1G70800.1"/>
<dbReference type="ProteomicsDB" id="239182"/>
<dbReference type="EnsemblPlants" id="AT1G70800.1">
    <property type="protein sequence ID" value="AT1G70800.1"/>
    <property type="gene ID" value="AT1G70800"/>
</dbReference>
<dbReference type="GeneID" id="843417"/>
<dbReference type="Gramene" id="AT1G70800.1">
    <property type="protein sequence ID" value="AT1G70800.1"/>
    <property type="gene ID" value="AT1G70800"/>
</dbReference>
<dbReference type="KEGG" id="ath:AT1G70800"/>
<dbReference type="Araport" id="AT1G70800"/>
<dbReference type="TAIR" id="AT1G70800">
    <property type="gene designation" value="EHB1"/>
</dbReference>
<dbReference type="eggNOG" id="KOG1030">
    <property type="taxonomic scope" value="Eukaryota"/>
</dbReference>
<dbReference type="HOGENOM" id="CLU_106037_0_0_1"/>
<dbReference type="InParanoid" id="Q9S764"/>
<dbReference type="OMA" id="MCEKCEG"/>
<dbReference type="OrthoDB" id="73919at2759"/>
<dbReference type="PhylomeDB" id="Q9S764"/>
<dbReference type="PRO" id="PR:Q9S764"/>
<dbReference type="Proteomes" id="UP000006548">
    <property type="component" value="Chromosome 1"/>
</dbReference>
<dbReference type="ExpressionAtlas" id="Q9S764">
    <property type="expression patterns" value="baseline and differential"/>
</dbReference>
<dbReference type="GO" id="GO:0005634">
    <property type="term" value="C:nucleus"/>
    <property type="evidence" value="ECO:0000250"/>
    <property type="project" value="UniProtKB"/>
</dbReference>
<dbReference type="GO" id="GO:0005886">
    <property type="term" value="C:plasma membrane"/>
    <property type="evidence" value="ECO:0000250"/>
    <property type="project" value="UniProtKB"/>
</dbReference>
<dbReference type="GO" id="GO:0005096">
    <property type="term" value="F:GTPase activator activity"/>
    <property type="evidence" value="ECO:0000250"/>
    <property type="project" value="UniProtKB"/>
</dbReference>
<dbReference type="GO" id="GO:0046872">
    <property type="term" value="F:metal ion binding"/>
    <property type="evidence" value="ECO:0007669"/>
    <property type="project" value="UniProtKB-KW"/>
</dbReference>
<dbReference type="GO" id="GO:0005543">
    <property type="term" value="F:phospholipid binding"/>
    <property type="evidence" value="ECO:0000250"/>
    <property type="project" value="UniProtKB"/>
</dbReference>
<dbReference type="GO" id="GO:0009738">
    <property type="term" value="P:abscisic acid-activated signaling pathway"/>
    <property type="evidence" value="ECO:0007669"/>
    <property type="project" value="UniProtKB-KW"/>
</dbReference>
<dbReference type="GO" id="GO:0009630">
    <property type="term" value="P:gravitropism"/>
    <property type="evidence" value="ECO:0000315"/>
    <property type="project" value="UniProtKB"/>
</dbReference>
<dbReference type="GO" id="GO:0009638">
    <property type="term" value="P:phototropism"/>
    <property type="evidence" value="ECO:0000315"/>
    <property type="project" value="TAIR"/>
</dbReference>
<dbReference type="GO" id="GO:0009789">
    <property type="term" value="P:positive regulation of abscisic acid-activated signaling pathway"/>
    <property type="evidence" value="ECO:0000250"/>
    <property type="project" value="UniProtKB"/>
</dbReference>
<dbReference type="GO" id="GO:0043547">
    <property type="term" value="P:positive regulation of GTPase activity"/>
    <property type="evidence" value="ECO:0000250"/>
    <property type="project" value="UniProtKB"/>
</dbReference>
<dbReference type="GO" id="GO:0009637">
    <property type="term" value="P:response to blue light"/>
    <property type="evidence" value="ECO:0000315"/>
    <property type="project" value="TAIR"/>
</dbReference>
<dbReference type="CDD" id="cd04038">
    <property type="entry name" value="C2_ArfGAP"/>
    <property type="match status" value="1"/>
</dbReference>
<dbReference type="Gene3D" id="2.60.40.150">
    <property type="entry name" value="C2 domain"/>
    <property type="match status" value="1"/>
</dbReference>
<dbReference type="InterPro" id="IPR000008">
    <property type="entry name" value="C2_dom"/>
</dbReference>
<dbReference type="InterPro" id="IPR035892">
    <property type="entry name" value="C2_domain_sf"/>
</dbReference>
<dbReference type="InterPro" id="IPR044562">
    <property type="entry name" value="CAR1-11"/>
</dbReference>
<dbReference type="PANTHER" id="PTHR45933">
    <property type="entry name" value="PROTEIN C2-DOMAIN ABA-RELATED 4"/>
    <property type="match status" value="1"/>
</dbReference>
<dbReference type="PANTHER" id="PTHR45933:SF22">
    <property type="entry name" value="PROTEIN C2-DOMAIN ABA-RELATED 6-RELATED"/>
    <property type="match status" value="1"/>
</dbReference>
<dbReference type="Pfam" id="PF00168">
    <property type="entry name" value="C2"/>
    <property type="match status" value="1"/>
</dbReference>
<dbReference type="SMART" id="SM00239">
    <property type="entry name" value="C2"/>
    <property type="match status" value="1"/>
</dbReference>
<dbReference type="SUPFAM" id="SSF49562">
    <property type="entry name" value="C2 domain (Calcium/lipid-binding domain, CaLB)"/>
    <property type="match status" value="1"/>
</dbReference>
<dbReference type="PROSITE" id="PS50004">
    <property type="entry name" value="C2"/>
    <property type="match status" value="1"/>
</dbReference>
<sequence>MEKTEEEVEMKELVGLVRILVKRGIDLARRDALSSDPFVVITMGPQKLKSFTVKNNCNPEWNEELTLAIEDPNEPVKLMVYDKDTFTADDKMGDAQIDMKPFLDVHKLGLKELPHGKELKRIVPTRDNCLSEDSIIVSDNGKIVQDMILLLKNVECGKVEIQLEWLKNPGGSGL</sequence>
<reference key="1">
    <citation type="journal article" date="2000" name="Nature">
        <title>Sequence and analysis of chromosome 1 of the plant Arabidopsis thaliana.</title>
        <authorList>
            <person name="Theologis A."/>
            <person name="Ecker J.R."/>
            <person name="Palm C.J."/>
            <person name="Federspiel N.A."/>
            <person name="Kaul S."/>
            <person name="White O."/>
            <person name="Alonso J."/>
            <person name="Altafi H."/>
            <person name="Araujo R."/>
            <person name="Bowman C.L."/>
            <person name="Brooks S.Y."/>
            <person name="Buehler E."/>
            <person name="Chan A."/>
            <person name="Chao Q."/>
            <person name="Chen H."/>
            <person name="Cheuk R.F."/>
            <person name="Chin C.W."/>
            <person name="Chung M.K."/>
            <person name="Conn L."/>
            <person name="Conway A.B."/>
            <person name="Conway A.R."/>
            <person name="Creasy T.H."/>
            <person name="Dewar K."/>
            <person name="Dunn P."/>
            <person name="Etgu P."/>
            <person name="Feldblyum T.V."/>
            <person name="Feng J.-D."/>
            <person name="Fong B."/>
            <person name="Fujii C.Y."/>
            <person name="Gill J.E."/>
            <person name="Goldsmith A.D."/>
            <person name="Haas B."/>
            <person name="Hansen N.F."/>
            <person name="Hughes B."/>
            <person name="Huizar L."/>
            <person name="Hunter J.L."/>
            <person name="Jenkins J."/>
            <person name="Johnson-Hopson C."/>
            <person name="Khan S."/>
            <person name="Khaykin E."/>
            <person name="Kim C.J."/>
            <person name="Koo H.L."/>
            <person name="Kremenetskaia I."/>
            <person name="Kurtz D.B."/>
            <person name="Kwan A."/>
            <person name="Lam B."/>
            <person name="Langin-Hooper S."/>
            <person name="Lee A."/>
            <person name="Lee J.M."/>
            <person name="Lenz C.A."/>
            <person name="Li J.H."/>
            <person name="Li Y.-P."/>
            <person name="Lin X."/>
            <person name="Liu S.X."/>
            <person name="Liu Z.A."/>
            <person name="Luros J.S."/>
            <person name="Maiti R."/>
            <person name="Marziali A."/>
            <person name="Militscher J."/>
            <person name="Miranda M."/>
            <person name="Nguyen M."/>
            <person name="Nierman W.C."/>
            <person name="Osborne B.I."/>
            <person name="Pai G."/>
            <person name="Peterson J."/>
            <person name="Pham P.K."/>
            <person name="Rizzo M."/>
            <person name="Rooney T."/>
            <person name="Rowley D."/>
            <person name="Sakano H."/>
            <person name="Salzberg S.L."/>
            <person name="Schwartz J.R."/>
            <person name="Shinn P."/>
            <person name="Southwick A.M."/>
            <person name="Sun H."/>
            <person name="Tallon L.J."/>
            <person name="Tambunga G."/>
            <person name="Toriumi M.J."/>
            <person name="Town C.D."/>
            <person name="Utterback T."/>
            <person name="Van Aken S."/>
            <person name="Vaysberg M."/>
            <person name="Vysotskaia V.S."/>
            <person name="Walker M."/>
            <person name="Wu D."/>
            <person name="Yu G."/>
            <person name="Fraser C.M."/>
            <person name="Venter J.C."/>
            <person name="Davis R.W."/>
        </authorList>
    </citation>
    <scope>NUCLEOTIDE SEQUENCE [LARGE SCALE GENOMIC DNA]</scope>
    <source>
        <strain>cv. Columbia</strain>
    </source>
</reference>
<reference key="2">
    <citation type="journal article" date="2017" name="Plant J.">
        <title>Araport11: a complete reannotation of the Arabidopsis thaliana reference genome.</title>
        <authorList>
            <person name="Cheng C.Y."/>
            <person name="Krishnakumar V."/>
            <person name="Chan A.P."/>
            <person name="Thibaud-Nissen F."/>
            <person name="Schobel S."/>
            <person name="Town C.D."/>
        </authorList>
    </citation>
    <scope>GENOME REANNOTATION</scope>
    <source>
        <strain>cv. Columbia</strain>
    </source>
</reference>
<reference key="3">
    <citation type="submission" date="2003-11" db="EMBL/GenBank/DDBJ databases">
        <title>Arabidopsis cDNA clones.</title>
        <authorList>
            <person name="Shinn P."/>
            <person name="Chen H."/>
            <person name="Cheuk R.F."/>
            <person name="Kim C.J."/>
            <person name="Ecker J.R."/>
        </authorList>
    </citation>
    <scope>NUCLEOTIDE SEQUENCE [LARGE SCALE MRNA]</scope>
    <source>
        <strain>cv. Columbia</strain>
    </source>
</reference>
<reference key="4">
    <citation type="journal article" date="2011" name="Plant Physiol.">
        <title>A negative effector of blue light-induced and gravitropic bending in Arabidopsis.</title>
        <authorList>
            <person name="Knauer T."/>
            <person name="Duemmer M."/>
            <person name="Landgraf F."/>
            <person name="Forreiter C."/>
        </authorList>
    </citation>
    <scope>FUNCTION</scope>
    <scope>DISRUPTION PHENOTYPE</scope>
    <scope>INTERACTION WITH RPT3/NPH3 AND PHOT1</scope>
</reference>
<reference key="5">
    <citation type="journal article" date="2014" name="Plant Cell">
        <title>C2-domain abscisic acid-related proteins mediate the interaction of PYR/PYL/RCAR abscisic acid receptors with the plasma membrane and regulate abscisic acid sensitivity in Arabidopsis.</title>
        <authorList>
            <person name="Rodriguez L."/>
            <person name="Gonzalez-Guzman M."/>
            <person name="Diaz M."/>
            <person name="Rodrigues A."/>
            <person name="Izquierdo-Garcia A.C."/>
            <person name="Peirats-Llobet M."/>
            <person name="Fernandez M.A."/>
            <person name="Antoni R."/>
            <person name="Fernandez D."/>
            <person name="Marquez J.A."/>
            <person name="Mulet J.M."/>
            <person name="Albert A."/>
            <person name="Rodriguez P.L."/>
        </authorList>
    </citation>
    <scope>GENE FAMILY</scope>
    <scope>NOMENCLATURE</scope>
</reference>
<comment type="function">
    <text evidence="1 2 4">Stimulates the GTPase/ATPase activities of Obg-like ATPases (By similarity). Mediates the transient calcium-dependent interaction of PYR/PYL/RCAR abscisic acid (ABA) receptors with the plasma membrane and thus regulates ABA sensitivity (By similarity). Prevents hypocotyl bending as well as gravitropic response under blue light conditions (PubMed:21367967).</text>
</comment>
<comment type="subunit">
    <text evidence="1 4">Binds to PYR/PYL/RCAR abscisic acid intracellular receptors in an ABA-independent manner, both at the plasma membrane and in the nucleus (By similarity). Subunit of a complex made of CAR6, PHOT1 and RPT3/NPH3. Interacts directly with RPT3/NPH3 (PubMed:21367967).</text>
</comment>
<comment type="subcellular location">
    <subcellularLocation>
        <location evidence="1">Cell membrane</location>
    </subcellularLocation>
    <subcellularLocation>
        <location evidence="1">Nucleus</location>
    </subcellularLocation>
</comment>
<comment type="disruption phenotype">
    <text evidence="4">Increased sensitivity to blue light leading to an enhanced phototropic bending and a faster response to gravitropic stimulus.</text>
</comment>
<comment type="similarity">
    <text evidence="7">Belongs to the plant CAR protein family.</text>
</comment>
<proteinExistence type="evidence at protein level"/>
<feature type="chain" id="PRO_0000433316" description="Protein C2-DOMAIN ABA-RELATED 6">
    <location>
        <begin position="1"/>
        <end position="174"/>
    </location>
</feature>
<feature type="domain" description="C2" evidence="3">
    <location>
        <begin position="1"/>
        <end position="115"/>
    </location>
</feature>
<feature type="binding site" evidence="2">
    <location>
        <position position="30"/>
    </location>
    <ligand>
        <name>Ca(2+)</name>
        <dbReference type="ChEBI" id="CHEBI:29108"/>
        <label>1</label>
    </ligand>
</feature>
<feature type="binding site" evidence="2">
    <location>
        <position position="31"/>
    </location>
    <ligand>
        <name>Ca(2+)</name>
        <dbReference type="ChEBI" id="CHEBI:29108"/>
        <label>1</label>
    </ligand>
</feature>
<feature type="binding site" evidence="2">
    <location>
        <position position="31"/>
    </location>
    <ligand>
        <name>Ca(2+)</name>
        <dbReference type="ChEBI" id="CHEBI:29108"/>
        <label>2</label>
    </ligand>
</feature>
<feature type="binding site" evidence="2">
    <location>
        <position position="36"/>
    </location>
    <ligand>
        <name>Ca(2+)</name>
        <dbReference type="ChEBI" id="CHEBI:29108"/>
        <label>2</label>
    </ligand>
</feature>
<feature type="binding site" evidence="2">
    <location>
        <position position="82"/>
    </location>
    <ligand>
        <name>Ca(2+)</name>
        <dbReference type="ChEBI" id="CHEBI:29108"/>
        <label>1</label>
    </ligand>
</feature>
<feature type="binding site" evidence="2">
    <location>
        <position position="82"/>
    </location>
    <ligand>
        <name>Ca(2+)</name>
        <dbReference type="ChEBI" id="CHEBI:29108"/>
        <label>2</label>
    </ligand>
</feature>
<feature type="binding site" evidence="2">
    <location>
        <position position="83"/>
    </location>
    <ligand>
        <name>Ca(2+)</name>
        <dbReference type="ChEBI" id="CHEBI:29108"/>
        <label>2</label>
    </ligand>
</feature>
<feature type="binding site" evidence="2">
    <location>
        <position position="84"/>
    </location>
    <ligand>
        <name>Ca(2+)</name>
        <dbReference type="ChEBI" id="CHEBI:29108"/>
        <label>1</label>
    </ligand>
</feature>
<feature type="binding site" evidence="2">
    <location>
        <position position="84"/>
    </location>
    <ligand>
        <name>Ca(2+)</name>
        <dbReference type="ChEBI" id="CHEBI:29108"/>
        <label>2</label>
    </ligand>
</feature>
<feature type="binding site" evidence="2">
    <location>
        <position position="90"/>
    </location>
    <ligand>
        <name>Ca(2+)</name>
        <dbReference type="ChEBI" id="CHEBI:29108"/>
        <label>1</label>
    </ligand>
</feature>
<organism evidence="11">
    <name type="scientific">Arabidopsis thaliana</name>
    <name type="common">Mouse-ear cress</name>
    <dbReference type="NCBI Taxonomy" id="3702"/>
    <lineage>
        <taxon>Eukaryota</taxon>
        <taxon>Viridiplantae</taxon>
        <taxon>Streptophyta</taxon>
        <taxon>Embryophyta</taxon>
        <taxon>Tracheophyta</taxon>
        <taxon>Spermatophyta</taxon>
        <taxon>Magnoliopsida</taxon>
        <taxon>eudicotyledons</taxon>
        <taxon>Gunneridae</taxon>
        <taxon>Pentapetalae</taxon>
        <taxon>rosids</taxon>
        <taxon>malvids</taxon>
        <taxon>Brassicales</taxon>
        <taxon>Brassicaceae</taxon>
        <taxon>Camelineae</taxon>
        <taxon>Arabidopsis</taxon>
    </lineage>
</organism>